<reference key="1">
    <citation type="journal article" date="1999" name="Nature">
        <title>Sequence and analysis of chromosome 4 of the plant Arabidopsis thaliana.</title>
        <authorList>
            <person name="Mayer K.F.X."/>
            <person name="Schueller C."/>
            <person name="Wambutt R."/>
            <person name="Murphy G."/>
            <person name="Volckaert G."/>
            <person name="Pohl T."/>
            <person name="Duesterhoeft A."/>
            <person name="Stiekema W."/>
            <person name="Entian K.-D."/>
            <person name="Terryn N."/>
            <person name="Harris B."/>
            <person name="Ansorge W."/>
            <person name="Brandt P."/>
            <person name="Grivell L.A."/>
            <person name="Rieger M."/>
            <person name="Weichselgartner M."/>
            <person name="de Simone V."/>
            <person name="Obermaier B."/>
            <person name="Mache R."/>
            <person name="Mueller M."/>
            <person name="Kreis M."/>
            <person name="Delseny M."/>
            <person name="Puigdomenech P."/>
            <person name="Watson M."/>
            <person name="Schmidtheini T."/>
            <person name="Reichert B."/>
            <person name="Portetelle D."/>
            <person name="Perez-Alonso M."/>
            <person name="Boutry M."/>
            <person name="Bancroft I."/>
            <person name="Vos P."/>
            <person name="Hoheisel J."/>
            <person name="Zimmermann W."/>
            <person name="Wedler H."/>
            <person name="Ridley P."/>
            <person name="Langham S.-A."/>
            <person name="McCullagh B."/>
            <person name="Bilham L."/>
            <person name="Robben J."/>
            <person name="van der Schueren J."/>
            <person name="Grymonprez B."/>
            <person name="Chuang Y.-J."/>
            <person name="Vandenbussche F."/>
            <person name="Braeken M."/>
            <person name="Weltjens I."/>
            <person name="Voet M."/>
            <person name="Bastiaens I."/>
            <person name="Aert R."/>
            <person name="Defoor E."/>
            <person name="Weitzenegger T."/>
            <person name="Bothe G."/>
            <person name="Ramsperger U."/>
            <person name="Hilbert H."/>
            <person name="Braun M."/>
            <person name="Holzer E."/>
            <person name="Brandt A."/>
            <person name="Peters S."/>
            <person name="van Staveren M."/>
            <person name="Dirkse W."/>
            <person name="Mooijman P."/>
            <person name="Klein Lankhorst R."/>
            <person name="Rose M."/>
            <person name="Hauf J."/>
            <person name="Koetter P."/>
            <person name="Berneiser S."/>
            <person name="Hempel S."/>
            <person name="Feldpausch M."/>
            <person name="Lamberth S."/>
            <person name="Van den Daele H."/>
            <person name="De Keyser A."/>
            <person name="Buysshaert C."/>
            <person name="Gielen J."/>
            <person name="Villarroel R."/>
            <person name="De Clercq R."/>
            <person name="van Montagu M."/>
            <person name="Rogers J."/>
            <person name="Cronin A."/>
            <person name="Quail M.A."/>
            <person name="Bray-Allen S."/>
            <person name="Clark L."/>
            <person name="Doggett J."/>
            <person name="Hall S."/>
            <person name="Kay M."/>
            <person name="Lennard N."/>
            <person name="McLay K."/>
            <person name="Mayes R."/>
            <person name="Pettett A."/>
            <person name="Rajandream M.A."/>
            <person name="Lyne M."/>
            <person name="Benes V."/>
            <person name="Rechmann S."/>
            <person name="Borkova D."/>
            <person name="Bloecker H."/>
            <person name="Scharfe M."/>
            <person name="Grimm M."/>
            <person name="Loehnert T.-H."/>
            <person name="Dose S."/>
            <person name="de Haan M."/>
            <person name="Maarse A.C."/>
            <person name="Schaefer M."/>
            <person name="Mueller-Auer S."/>
            <person name="Gabel C."/>
            <person name="Fuchs M."/>
            <person name="Fartmann B."/>
            <person name="Granderath K."/>
            <person name="Dauner D."/>
            <person name="Herzl A."/>
            <person name="Neumann S."/>
            <person name="Argiriou A."/>
            <person name="Vitale D."/>
            <person name="Liguori R."/>
            <person name="Piravandi E."/>
            <person name="Massenet O."/>
            <person name="Quigley F."/>
            <person name="Clabauld G."/>
            <person name="Muendlein A."/>
            <person name="Felber R."/>
            <person name="Schnabl S."/>
            <person name="Hiller R."/>
            <person name="Schmidt W."/>
            <person name="Lecharny A."/>
            <person name="Aubourg S."/>
            <person name="Chefdor F."/>
            <person name="Cooke R."/>
            <person name="Berger C."/>
            <person name="Monfort A."/>
            <person name="Casacuberta E."/>
            <person name="Gibbons T."/>
            <person name="Weber N."/>
            <person name="Vandenbol M."/>
            <person name="Bargues M."/>
            <person name="Terol J."/>
            <person name="Torres A."/>
            <person name="Perez-Perez A."/>
            <person name="Purnelle B."/>
            <person name="Bent E."/>
            <person name="Johnson S."/>
            <person name="Tacon D."/>
            <person name="Jesse T."/>
            <person name="Heijnen L."/>
            <person name="Schwarz S."/>
            <person name="Scholler P."/>
            <person name="Heber S."/>
            <person name="Francs P."/>
            <person name="Bielke C."/>
            <person name="Frishman D."/>
            <person name="Haase D."/>
            <person name="Lemcke K."/>
            <person name="Mewes H.-W."/>
            <person name="Stocker S."/>
            <person name="Zaccaria P."/>
            <person name="Bevan M."/>
            <person name="Wilson R.K."/>
            <person name="de la Bastide M."/>
            <person name="Habermann K."/>
            <person name="Parnell L."/>
            <person name="Dedhia N."/>
            <person name="Gnoj L."/>
            <person name="Schutz K."/>
            <person name="Huang E."/>
            <person name="Spiegel L."/>
            <person name="Sekhon M."/>
            <person name="Murray J."/>
            <person name="Sheet P."/>
            <person name="Cordes M."/>
            <person name="Abu-Threideh J."/>
            <person name="Stoneking T."/>
            <person name="Kalicki J."/>
            <person name="Graves T."/>
            <person name="Harmon G."/>
            <person name="Edwards J."/>
            <person name="Latreille P."/>
            <person name="Courtney L."/>
            <person name="Cloud J."/>
            <person name="Abbott A."/>
            <person name="Scott K."/>
            <person name="Johnson D."/>
            <person name="Minx P."/>
            <person name="Bentley D."/>
            <person name="Fulton B."/>
            <person name="Miller N."/>
            <person name="Greco T."/>
            <person name="Kemp K."/>
            <person name="Kramer J."/>
            <person name="Fulton L."/>
            <person name="Mardis E."/>
            <person name="Dante M."/>
            <person name="Pepin K."/>
            <person name="Hillier L.W."/>
            <person name="Nelson J."/>
            <person name="Spieth J."/>
            <person name="Ryan E."/>
            <person name="Andrews S."/>
            <person name="Geisel C."/>
            <person name="Layman D."/>
            <person name="Du H."/>
            <person name="Ali J."/>
            <person name="Berghoff A."/>
            <person name="Jones K."/>
            <person name="Drone K."/>
            <person name="Cotton M."/>
            <person name="Joshu C."/>
            <person name="Antonoiu B."/>
            <person name="Zidanic M."/>
            <person name="Strong C."/>
            <person name="Sun H."/>
            <person name="Lamar B."/>
            <person name="Yordan C."/>
            <person name="Ma P."/>
            <person name="Zhong J."/>
            <person name="Preston R."/>
            <person name="Vil D."/>
            <person name="Shekher M."/>
            <person name="Matero A."/>
            <person name="Shah R."/>
            <person name="Swaby I.K."/>
            <person name="O'Shaughnessy A."/>
            <person name="Rodriguez M."/>
            <person name="Hoffman J."/>
            <person name="Till S."/>
            <person name="Granat S."/>
            <person name="Shohdy N."/>
            <person name="Hasegawa A."/>
            <person name="Hameed A."/>
            <person name="Lodhi M."/>
            <person name="Johnson A."/>
            <person name="Chen E."/>
            <person name="Marra M.A."/>
            <person name="Martienssen R."/>
            <person name="McCombie W.R."/>
        </authorList>
    </citation>
    <scope>NUCLEOTIDE SEQUENCE [LARGE SCALE GENOMIC DNA]</scope>
    <source>
        <strain>cv. Columbia</strain>
    </source>
</reference>
<reference key="2">
    <citation type="journal article" date="2017" name="Plant J.">
        <title>Araport11: a complete reannotation of the Arabidopsis thaliana reference genome.</title>
        <authorList>
            <person name="Cheng C.Y."/>
            <person name="Krishnakumar V."/>
            <person name="Chan A.P."/>
            <person name="Thibaud-Nissen F."/>
            <person name="Schobel S."/>
            <person name="Town C.D."/>
        </authorList>
    </citation>
    <scope>GENOME REANNOTATION</scope>
    <source>
        <strain>cv. Columbia</strain>
    </source>
</reference>
<reference key="3">
    <citation type="submission" date="2006-07" db="EMBL/GenBank/DDBJ databases">
        <title>Large-scale analysis of RIKEN Arabidopsis full-length (RAFL) cDNAs.</title>
        <authorList>
            <person name="Totoki Y."/>
            <person name="Seki M."/>
            <person name="Ishida J."/>
            <person name="Nakajima M."/>
            <person name="Enju A."/>
            <person name="Kamiya A."/>
            <person name="Narusaka M."/>
            <person name="Shin-i T."/>
            <person name="Nakagawa M."/>
            <person name="Sakamoto N."/>
            <person name="Oishi K."/>
            <person name="Kohara Y."/>
            <person name="Kobayashi M."/>
            <person name="Toyoda A."/>
            <person name="Sakaki Y."/>
            <person name="Sakurai T."/>
            <person name="Iida K."/>
            <person name="Akiyama K."/>
            <person name="Satou M."/>
            <person name="Toyoda T."/>
            <person name="Konagaya A."/>
            <person name="Carninci P."/>
            <person name="Kawai J."/>
            <person name="Hayashizaki Y."/>
            <person name="Shinozaki K."/>
        </authorList>
    </citation>
    <scope>NUCLEOTIDE SEQUENCE [LARGE SCALE MRNA]</scope>
    <source>
        <strain>cv. Columbia</strain>
    </source>
</reference>
<reference key="4">
    <citation type="journal article" date="2000" name="Plant Cell">
        <title>A new family of high-affinity transporters for adenine, cytosine, and purine derivatives in Arabidopsis.</title>
        <authorList>
            <person name="Gillissen B."/>
            <person name="Buerkle L."/>
            <person name="Andre B."/>
            <person name="Kuehn C."/>
            <person name="Rentsch D."/>
            <person name="Brandl B."/>
            <person name="Frommer W.B."/>
        </authorList>
    </citation>
    <scope>GENE FAMILY</scope>
    <scope>NOMENCLATURE</scope>
</reference>
<reference key="5">
    <citation type="journal article" date="2007" name="Plant Cell Physiol.">
        <title>Functional classification of Arabidopsis peroxisome biogenesis factors proposed from analyses of knockdown mutants.</title>
        <authorList>
            <person name="Nito K."/>
            <person name="Kamigaki A."/>
            <person name="Kondo M."/>
            <person name="Hayashi M."/>
            <person name="Nishimura M."/>
        </authorList>
    </citation>
    <scope>IDENTIFICATION AS PEX17</scope>
</reference>
<name>PUP7_ARATH</name>
<comment type="subcellular location">
    <subcellularLocation>
        <location evidence="2">Membrane</location>
        <topology evidence="2">Multi-pass membrane protein</topology>
    </subcellularLocation>
</comment>
<comment type="similarity">
    <text evidence="2">Belongs to the purine permeases (TC 2.A.7.14) family.</text>
</comment>
<comment type="caution">
    <text evidence="3">The function in peroxisome biogenesis is dubious.</text>
</comment>
<comment type="sequence caution" evidence="2">
    <conflict type="erroneous gene model prediction">
        <sequence resource="EMBL-CDS" id="CAA16792"/>
    </conflict>
    <text>The predicted gene At4g18200 has been split into 3 genes: At4g18195, At4g18197 and At4g18205.</text>
</comment>
<comment type="sequence caution" evidence="2">
    <conflict type="erroneous gene model prediction">
        <sequence resource="EMBL-CDS" id="CAB78822"/>
    </conflict>
    <text>The predicted gene At4g18200 has been split into 3 genes: At4g18195, At4g18197 and At4g18205.</text>
</comment>
<dbReference type="EMBL" id="AL021713">
    <property type="protein sequence ID" value="CAA16792.1"/>
    <property type="status" value="ALT_SEQ"/>
    <property type="molecule type" value="Genomic_DNA"/>
</dbReference>
<dbReference type="EMBL" id="AL161548">
    <property type="protein sequence ID" value="CAB78822.1"/>
    <property type="status" value="ALT_SEQ"/>
    <property type="molecule type" value="Genomic_DNA"/>
</dbReference>
<dbReference type="EMBL" id="CP002687">
    <property type="protein sequence ID" value="AEE84010.1"/>
    <property type="molecule type" value="Genomic_DNA"/>
</dbReference>
<dbReference type="EMBL" id="AK227637">
    <property type="protein sequence ID" value="BAE99627.1"/>
    <property type="molecule type" value="mRNA"/>
</dbReference>
<dbReference type="RefSeq" id="NP_001031663.1">
    <property type="nucleotide sequence ID" value="NM_001036586.3"/>
</dbReference>
<dbReference type="BioGRID" id="530664">
    <property type="interactions" value="3"/>
</dbReference>
<dbReference type="FunCoup" id="Q2V3H2">
    <property type="interactions" value="2"/>
</dbReference>
<dbReference type="IntAct" id="Q2V3H2">
    <property type="interactions" value="3"/>
</dbReference>
<dbReference type="STRING" id="3702.Q2V3H2"/>
<dbReference type="PaxDb" id="3702-AT4G18197.1"/>
<dbReference type="ProteomicsDB" id="226357"/>
<dbReference type="EnsemblPlants" id="AT4G18197.1">
    <property type="protein sequence ID" value="AT4G18197.1"/>
    <property type="gene ID" value="AT4G18197"/>
</dbReference>
<dbReference type="GeneID" id="3770303"/>
<dbReference type="Gramene" id="AT4G18197.1">
    <property type="protein sequence ID" value="AT4G18197.1"/>
    <property type="gene ID" value="AT4G18197"/>
</dbReference>
<dbReference type="KEGG" id="ath:AT4G18197"/>
<dbReference type="Araport" id="AT4G18197"/>
<dbReference type="TAIR" id="AT4G18197">
    <property type="gene designation" value="PUP7"/>
</dbReference>
<dbReference type="eggNOG" id="ENOG502QVMQ">
    <property type="taxonomic scope" value="Eukaryota"/>
</dbReference>
<dbReference type="HOGENOM" id="CLU_043459_2_1_1"/>
<dbReference type="InParanoid" id="Q2V3H2"/>
<dbReference type="OMA" id="CQPLATI"/>
<dbReference type="PhylomeDB" id="Q2V3H2"/>
<dbReference type="PRO" id="PR:Q2V3H2"/>
<dbReference type="Proteomes" id="UP000006548">
    <property type="component" value="Chromosome 4"/>
</dbReference>
<dbReference type="ExpressionAtlas" id="Q2V3H2">
    <property type="expression patterns" value="baseline and differential"/>
</dbReference>
<dbReference type="GO" id="GO:0016020">
    <property type="term" value="C:membrane"/>
    <property type="evidence" value="ECO:0000304"/>
    <property type="project" value="TAIR"/>
</dbReference>
<dbReference type="GO" id="GO:0005345">
    <property type="term" value="F:purine nucleobase transmembrane transporter activity"/>
    <property type="evidence" value="ECO:0000304"/>
    <property type="project" value="TAIR"/>
</dbReference>
<dbReference type="GO" id="GO:0015211">
    <property type="term" value="F:purine nucleoside transmembrane transporter activity"/>
    <property type="evidence" value="ECO:0007669"/>
    <property type="project" value="InterPro"/>
</dbReference>
<dbReference type="GO" id="GO:0006863">
    <property type="term" value="P:purine nucleobase transport"/>
    <property type="evidence" value="ECO:0000304"/>
    <property type="project" value="TAIR"/>
</dbReference>
<dbReference type="InterPro" id="IPR030182">
    <property type="entry name" value="PUP_plant"/>
</dbReference>
<dbReference type="PANTHER" id="PTHR31376">
    <property type="entry name" value="OS09G0467300 PROTEIN-RELATED"/>
    <property type="match status" value="1"/>
</dbReference>
<dbReference type="PANTHER" id="PTHR31376:SF57">
    <property type="entry name" value="PURINE PERMEASE 22-RELATED"/>
    <property type="match status" value="1"/>
</dbReference>
<dbReference type="Pfam" id="PF16913">
    <property type="entry name" value="PUNUT"/>
    <property type="match status" value="1"/>
</dbReference>
<dbReference type="SUPFAM" id="SSF103481">
    <property type="entry name" value="Multidrug resistance efflux transporter EmrE"/>
    <property type="match status" value="1"/>
</dbReference>
<protein>
    <recommendedName>
        <fullName>Probable purine permease 7</fullName>
        <shortName>AtPUP7</shortName>
    </recommendedName>
    <alternativeName>
        <fullName>Peroxisomal biogenesis protein 17</fullName>
    </alternativeName>
</protein>
<proteinExistence type="evidence at transcript level"/>
<feature type="chain" id="PRO_0000317394" description="Probable purine permease 7">
    <location>
        <begin position="1"/>
        <end position="390"/>
    </location>
</feature>
<feature type="transmembrane region" description="Helical" evidence="1">
    <location>
        <begin position="42"/>
        <end position="62"/>
    </location>
</feature>
<feature type="transmembrane region" description="Helical" evidence="1">
    <location>
        <begin position="74"/>
        <end position="94"/>
    </location>
</feature>
<feature type="transmembrane region" description="Helical" evidence="1">
    <location>
        <begin position="110"/>
        <end position="130"/>
    </location>
</feature>
<feature type="transmembrane region" description="Helical" evidence="1">
    <location>
        <begin position="131"/>
        <end position="151"/>
    </location>
</feature>
<feature type="transmembrane region" description="Helical" evidence="1">
    <location>
        <begin position="169"/>
        <end position="189"/>
    </location>
</feature>
<feature type="transmembrane region" description="Helical" evidence="1">
    <location>
        <begin position="205"/>
        <end position="225"/>
    </location>
</feature>
<feature type="transmembrane region" description="Helical" evidence="1">
    <location>
        <begin position="244"/>
        <end position="264"/>
    </location>
</feature>
<feature type="transmembrane region" description="Helical" evidence="1">
    <location>
        <begin position="286"/>
        <end position="306"/>
    </location>
</feature>
<feature type="transmembrane region" description="Helical" evidence="1">
    <location>
        <begin position="312"/>
        <end position="332"/>
    </location>
</feature>
<feature type="transmembrane region" description="Helical" evidence="1">
    <location>
        <begin position="341"/>
        <end position="361"/>
    </location>
</feature>
<accession>Q2V3H2</accession>
<accession>O49724</accession>
<organism>
    <name type="scientific">Arabidopsis thaliana</name>
    <name type="common">Mouse-ear cress</name>
    <dbReference type="NCBI Taxonomy" id="3702"/>
    <lineage>
        <taxon>Eukaryota</taxon>
        <taxon>Viridiplantae</taxon>
        <taxon>Streptophyta</taxon>
        <taxon>Embryophyta</taxon>
        <taxon>Tracheophyta</taxon>
        <taxon>Spermatophyta</taxon>
        <taxon>Magnoliopsida</taxon>
        <taxon>eudicotyledons</taxon>
        <taxon>Gunneridae</taxon>
        <taxon>Pentapetalae</taxon>
        <taxon>rosids</taxon>
        <taxon>malvids</taxon>
        <taxon>Brassicales</taxon>
        <taxon>Brassicaceae</taxon>
        <taxon>Camelineae</taxon>
        <taxon>Arabidopsis</taxon>
    </lineage>
</organism>
<sequence length="390" mass="42805">MDRSQEHYANGDQNLEANLIDHEVVTESSSSAVPQTENYKRWLRVSIYVIFVLFCQPLATILGRLYYENGGNSTYVVTLLQLIGFPVLVLFRFFSRIRQPKSTDTNFSQSPSFTTLASVYLCTGLLVSAYAYLSAVGLLYLPVSTFSLILASQLAFTAFFSYFLNSQKFTPLIVSSLLLLTVSSALLVVNTDSENSTNVSRVQYVIGFICTIGASAGIGLLLSLIQMLFRKVFTKHTSSAVTDLAIYQSLVASCVVLIGLFASGEWETLPSEMRNYKLGKVSYVLTLASAAISWQVYTLGLVGLIFESSSVFSNSITAVGLPIVPVAAVIVFHDRMDASKIFSIILAICGFLSFVYQHYLDEKKLNTSHTSAVGDLHLPVEEGHTNIQSV</sequence>
<keyword id="KW-0472">Membrane</keyword>
<keyword id="KW-1185">Reference proteome</keyword>
<keyword id="KW-0812">Transmembrane</keyword>
<keyword id="KW-1133">Transmembrane helix</keyword>
<keyword id="KW-0813">Transport</keyword>
<evidence type="ECO:0000255" key="1"/>
<evidence type="ECO:0000305" key="2"/>
<evidence type="ECO:0000305" key="3">
    <source>
    </source>
</evidence>
<gene>
    <name type="primary">PUP7</name>
    <name type="synonym">PEX17</name>
    <name type="ordered locus">At4g18197</name>
    <name type="ORF">T9A21.50</name>
</gene>